<comment type="function">
    <text evidence="1">Specific inhibitor of cysteine proteinases. Probably involved in the regulation of endogenous processes and in defense against pests and pathogens (By similarity).</text>
</comment>
<comment type="subcellular location">
    <subcellularLocation>
        <location evidence="4">Secreted</location>
    </subcellularLocation>
</comment>
<comment type="similarity">
    <text evidence="4">Belongs to the cystatin family. Phytocystatin subfamily.</text>
</comment>
<sequence>MLRRRGFCCCSGAPAAAAAALLLLAVAAAAPRAAGFHLGGDESVLVRGMLAAIRREQAEAEDAARFAVAEYNKNQGAELEFARIVKAKRQVVTGTLHDLMLEVVDSGKKSLYSAKVWVKPWLDFKAVVEFRHVGDSQSQSATAADDNAGQDTADPTVASRNDLHNTENNKVSVVLSTFSQTYSV</sequence>
<accession>Q6I570</accession>
<accession>A0A0P0WM62</accession>
<gene>
    <name type="ordered locus">Os05g0409300</name>
    <name type="ordered locus">LOC_Os05g33880</name>
    <name type="ORF">OSJNBb0014K18.11</name>
</gene>
<name>CYT3_ORYSJ</name>
<feature type="signal peptide" evidence="2">
    <location>
        <begin position="1"/>
        <end position="35"/>
    </location>
</feature>
<feature type="chain" id="PRO_0000277500" description="Cysteine proteinase inhibitor 3">
    <location>
        <begin position="36"/>
        <end position="184"/>
    </location>
</feature>
<feature type="domain" description="Cystatin">
    <location>
        <begin position="48"/>
        <end position="134"/>
    </location>
</feature>
<feature type="region of interest" description="Disordered" evidence="3">
    <location>
        <begin position="138"/>
        <end position="165"/>
    </location>
</feature>
<feature type="short sequence motif" description="Secondary area of contact" evidence="1">
    <location>
        <begin position="90"/>
        <end position="94"/>
    </location>
</feature>
<feature type="site" description="Reactive site" evidence="1">
    <location>
        <position position="39"/>
    </location>
</feature>
<feature type="sequence conflict" description="In Ref. 5; AK065214." evidence="4" ref="5">
    <original>E</original>
    <variation>G</variation>
    <location>
        <position position="80"/>
    </location>
</feature>
<keyword id="KW-0611">Plant defense</keyword>
<keyword id="KW-0646">Protease inhibitor</keyword>
<keyword id="KW-1185">Reference proteome</keyword>
<keyword id="KW-0964">Secreted</keyword>
<keyword id="KW-0732">Signal</keyword>
<keyword id="KW-0789">Thiol protease inhibitor</keyword>
<evidence type="ECO:0000250" key="1"/>
<evidence type="ECO:0000255" key="2"/>
<evidence type="ECO:0000256" key="3">
    <source>
        <dbReference type="SAM" id="MobiDB-lite"/>
    </source>
</evidence>
<evidence type="ECO:0000305" key="4"/>
<proteinExistence type="evidence at transcript level"/>
<reference key="1">
    <citation type="journal article" date="2005" name="Mol. Genet. Genomics">
        <title>A fine physical map of the rice chromosome 5.</title>
        <authorList>
            <person name="Cheng C.-H."/>
            <person name="Chung M.C."/>
            <person name="Liu S.-M."/>
            <person name="Chen S.-K."/>
            <person name="Kao F.Y."/>
            <person name="Lin S.-J."/>
            <person name="Hsiao S.-H."/>
            <person name="Tseng I.C."/>
            <person name="Hsing Y.-I.C."/>
            <person name="Wu H.-P."/>
            <person name="Chen C.-S."/>
            <person name="Shaw J.-F."/>
            <person name="Wu J."/>
            <person name="Matsumoto T."/>
            <person name="Sasaki T."/>
            <person name="Chen H.-C."/>
            <person name="Chow T.-Y."/>
        </authorList>
    </citation>
    <scope>NUCLEOTIDE SEQUENCE [LARGE SCALE GENOMIC DNA]</scope>
    <source>
        <strain>cv. Nipponbare</strain>
    </source>
</reference>
<reference key="2">
    <citation type="journal article" date="2005" name="Nature">
        <title>The map-based sequence of the rice genome.</title>
        <authorList>
            <consortium name="International rice genome sequencing project (IRGSP)"/>
        </authorList>
    </citation>
    <scope>NUCLEOTIDE SEQUENCE [LARGE SCALE GENOMIC DNA]</scope>
    <source>
        <strain>cv. Nipponbare</strain>
    </source>
</reference>
<reference key="3">
    <citation type="journal article" date="2008" name="Nucleic Acids Res.">
        <title>The rice annotation project database (RAP-DB): 2008 update.</title>
        <authorList>
            <consortium name="The rice annotation project (RAP)"/>
        </authorList>
    </citation>
    <scope>GENOME REANNOTATION</scope>
    <source>
        <strain>cv. Nipponbare</strain>
    </source>
</reference>
<reference key="4">
    <citation type="journal article" date="2013" name="Rice">
        <title>Improvement of the Oryza sativa Nipponbare reference genome using next generation sequence and optical map data.</title>
        <authorList>
            <person name="Kawahara Y."/>
            <person name="de la Bastide M."/>
            <person name="Hamilton J.P."/>
            <person name="Kanamori H."/>
            <person name="McCombie W.R."/>
            <person name="Ouyang S."/>
            <person name="Schwartz D.C."/>
            <person name="Tanaka T."/>
            <person name="Wu J."/>
            <person name="Zhou S."/>
            <person name="Childs K.L."/>
            <person name="Davidson R.M."/>
            <person name="Lin H."/>
            <person name="Quesada-Ocampo L."/>
            <person name="Vaillancourt B."/>
            <person name="Sakai H."/>
            <person name="Lee S.S."/>
            <person name="Kim J."/>
            <person name="Numa H."/>
            <person name="Itoh T."/>
            <person name="Buell C.R."/>
            <person name="Matsumoto T."/>
        </authorList>
    </citation>
    <scope>GENOME REANNOTATION</scope>
    <source>
        <strain>cv. Nipponbare</strain>
    </source>
</reference>
<reference key="5">
    <citation type="journal article" date="2003" name="Science">
        <title>Collection, mapping, and annotation of over 28,000 cDNA clones from japonica rice.</title>
        <authorList>
            <consortium name="The rice full-length cDNA consortium"/>
        </authorList>
    </citation>
    <scope>NUCLEOTIDE SEQUENCE [LARGE SCALE MRNA]</scope>
    <source>
        <strain>cv. Nipponbare</strain>
    </source>
</reference>
<reference key="6">
    <citation type="journal article" date="2005" name="Mol. Genet. Genomics">
        <title>Comparative phylogenetic analysis of cystatin gene families from arabidopsis, rice and barley.</title>
        <authorList>
            <person name="Martinez M."/>
            <person name="Abraham Z."/>
            <person name="Carbonero P."/>
            <person name="Diaz I."/>
        </authorList>
    </citation>
    <scope>GENE FAMILY</scope>
</reference>
<organism>
    <name type="scientific">Oryza sativa subsp. japonica</name>
    <name type="common">Rice</name>
    <dbReference type="NCBI Taxonomy" id="39947"/>
    <lineage>
        <taxon>Eukaryota</taxon>
        <taxon>Viridiplantae</taxon>
        <taxon>Streptophyta</taxon>
        <taxon>Embryophyta</taxon>
        <taxon>Tracheophyta</taxon>
        <taxon>Spermatophyta</taxon>
        <taxon>Magnoliopsida</taxon>
        <taxon>Liliopsida</taxon>
        <taxon>Poales</taxon>
        <taxon>Poaceae</taxon>
        <taxon>BOP clade</taxon>
        <taxon>Oryzoideae</taxon>
        <taxon>Oryzeae</taxon>
        <taxon>Oryzinae</taxon>
        <taxon>Oryza</taxon>
        <taxon>Oryza sativa</taxon>
    </lineage>
</organism>
<dbReference type="EMBL" id="AC137620">
    <property type="protein sequence ID" value="AAT58854.1"/>
    <property type="molecule type" value="Genomic_DNA"/>
</dbReference>
<dbReference type="EMBL" id="AP008211">
    <property type="protein sequence ID" value="BAF17441.1"/>
    <property type="molecule type" value="Genomic_DNA"/>
</dbReference>
<dbReference type="EMBL" id="AP014961">
    <property type="protein sequence ID" value="BAS93984.1"/>
    <property type="molecule type" value="Genomic_DNA"/>
</dbReference>
<dbReference type="EMBL" id="AK065214">
    <property type="status" value="NOT_ANNOTATED_CDS"/>
    <property type="molecule type" value="mRNA"/>
</dbReference>
<dbReference type="RefSeq" id="XP_015640576.1">
    <property type="nucleotide sequence ID" value="XM_015785090.1"/>
</dbReference>
<dbReference type="SMR" id="Q6I570"/>
<dbReference type="FunCoup" id="Q6I570">
    <property type="interactions" value="1"/>
</dbReference>
<dbReference type="STRING" id="39947.Q6I570"/>
<dbReference type="MEROPS" id="I25.053"/>
<dbReference type="PaxDb" id="39947-Q6I570"/>
<dbReference type="EnsemblPlants" id="Os05t0409300-01">
    <property type="protein sequence ID" value="Os05t0409300-01"/>
    <property type="gene ID" value="Os05g0409300"/>
</dbReference>
<dbReference type="Gramene" id="Os05t0409300-01">
    <property type="protein sequence ID" value="Os05t0409300-01"/>
    <property type="gene ID" value="Os05g0409300"/>
</dbReference>
<dbReference type="KEGG" id="dosa:Os05g0409300"/>
<dbReference type="eggNOG" id="ENOG502R76J">
    <property type="taxonomic scope" value="Eukaryota"/>
</dbReference>
<dbReference type="HOGENOM" id="CLU_113093_1_0_1"/>
<dbReference type="InParanoid" id="Q6I570"/>
<dbReference type="OMA" id="ASGGITW"/>
<dbReference type="OrthoDB" id="1908104at2759"/>
<dbReference type="Proteomes" id="UP000000763">
    <property type="component" value="Chromosome 5"/>
</dbReference>
<dbReference type="Proteomes" id="UP000059680">
    <property type="component" value="Chromosome 5"/>
</dbReference>
<dbReference type="ExpressionAtlas" id="Q6I570">
    <property type="expression patterns" value="baseline and differential"/>
</dbReference>
<dbReference type="GO" id="GO:0005576">
    <property type="term" value="C:extracellular region"/>
    <property type="evidence" value="ECO:0007669"/>
    <property type="project" value="UniProtKB-SubCell"/>
</dbReference>
<dbReference type="GO" id="GO:0004869">
    <property type="term" value="F:cysteine-type endopeptidase inhibitor activity"/>
    <property type="evidence" value="ECO:0000318"/>
    <property type="project" value="GO_Central"/>
</dbReference>
<dbReference type="GO" id="GO:0006952">
    <property type="term" value="P:defense response"/>
    <property type="evidence" value="ECO:0007669"/>
    <property type="project" value="UniProtKB-KW"/>
</dbReference>
<dbReference type="CDD" id="cd00042">
    <property type="entry name" value="CY"/>
    <property type="match status" value="1"/>
</dbReference>
<dbReference type="FunFam" id="3.10.450.10:FF:000016">
    <property type="entry name" value="Cysteine proteinase inhibitor"/>
    <property type="match status" value="1"/>
</dbReference>
<dbReference type="Gene3D" id="3.10.450.10">
    <property type="match status" value="1"/>
</dbReference>
<dbReference type="InterPro" id="IPR027214">
    <property type="entry name" value="Cystatin"/>
</dbReference>
<dbReference type="InterPro" id="IPR000010">
    <property type="entry name" value="Cystatin_dom"/>
</dbReference>
<dbReference type="InterPro" id="IPR046350">
    <property type="entry name" value="Cystatin_sf"/>
</dbReference>
<dbReference type="PANTHER" id="PTHR11413">
    <property type="entry name" value="CYSTATIN FAMILY MEMBER"/>
    <property type="match status" value="1"/>
</dbReference>
<dbReference type="PANTHER" id="PTHR11413:SF124">
    <property type="entry name" value="CYSTEINE PROTEINASE INHIBITOR 3"/>
    <property type="match status" value="1"/>
</dbReference>
<dbReference type="Pfam" id="PF16845">
    <property type="entry name" value="SQAPI"/>
    <property type="match status" value="1"/>
</dbReference>
<dbReference type="SMART" id="SM00043">
    <property type="entry name" value="CY"/>
    <property type="match status" value="1"/>
</dbReference>
<dbReference type="SUPFAM" id="SSF54403">
    <property type="entry name" value="Cystatin/monellin"/>
    <property type="match status" value="1"/>
</dbReference>
<protein>
    <recommendedName>
        <fullName>Cysteine proteinase inhibitor 3</fullName>
    </recommendedName>
    <alternativeName>
        <fullName>Oryzacystatin III</fullName>
        <shortName>OC-III</shortName>
    </alternativeName>
    <alternativeName>
        <fullName>Oryzacystatin-3</fullName>
    </alternativeName>
</protein>